<name>TRHO_BURPS</name>
<reference key="1">
    <citation type="journal article" date="2004" name="Proc. Natl. Acad. Sci. U.S.A.">
        <title>Genomic plasticity of the causative agent of melioidosis, Burkholderia pseudomallei.</title>
        <authorList>
            <person name="Holden M.T.G."/>
            <person name="Titball R.W."/>
            <person name="Peacock S.J."/>
            <person name="Cerdeno-Tarraga A.-M."/>
            <person name="Atkins T."/>
            <person name="Crossman L.C."/>
            <person name="Pitt T."/>
            <person name="Churcher C."/>
            <person name="Mungall K.L."/>
            <person name="Bentley S.D."/>
            <person name="Sebaihia M."/>
            <person name="Thomson N.R."/>
            <person name="Bason N."/>
            <person name="Beacham I.R."/>
            <person name="Brooks K."/>
            <person name="Brown K.A."/>
            <person name="Brown N.F."/>
            <person name="Challis G.L."/>
            <person name="Cherevach I."/>
            <person name="Chillingworth T."/>
            <person name="Cronin A."/>
            <person name="Crossett B."/>
            <person name="Davis P."/>
            <person name="DeShazer D."/>
            <person name="Feltwell T."/>
            <person name="Fraser A."/>
            <person name="Hance Z."/>
            <person name="Hauser H."/>
            <person name="Holroyd S."/>
            <person name="Jagels K."/>
            <person name="Keith K.E."/>
            <person name="Maddison M."/>
            <person name="Moule S."/>
            <person name="Price C."/>
            <person name="Quail M.A."/>
            <person name="Rabbinowitsch E."/>
            <person name="Rutherford K."/>
            <person name="Sanders M."/>
            <person name="Simmonds M."/>
            <person name="Songsivilai S."/>
            <person name="Stevens K."/>
            <person name="Tumapa S."/>
            <person name="Vesaratchavest M."/>
            <person name="Whitehead S."/>
            <person name="Yeats C."/>
            <person name="Barrell B.G."/>
            <person name="Oyston P.C.F."/>
            <person name="Parkhill J."/>
        </authorList>
    </citation>
    <scope>NUCLEOTIDE SEQUENCE [LARGE SCALE GENOMIC DNA]</scope>
    <source>
        <strain>K96243</strain>
    </source>
</reference>
<feature type="chain" id="PRO_0000161459" description="tRNA uridine(34) hydroxylase">
    <location>
        <begin position="1"/>
        <end position="299"/>
    </location>
</feature>
<feature type="domain" description="Rhodanese" evidence="1">
    <location>
        <begin position="132"/>
        <end position="226"/>
    </location>
</feature>
<feature type="active site" description="Cysteine persulfide intermediate" evidence="1">
    <location>
        <position position="186"/>
    </location>
</feature>
<accession>Q63VX9</accession>
<evidence type="ECO:0000255" key="1">
    <source>
        <dbReference type="HAMAP-Rule" id="MF_00469"/>
    </source>
</evidence>
<sequence length="299" mass="32949">MTTVNLAAYRFVSLDSIEQWRPLVAARCNTLGLRGTILLAPEGINLFIAGPREATDAFVDYIRHDPLFEGKFADLPFKESLSDSQPFRRMLVRLKREIITMKKPAIKPELGRAPSVDARTLKAWLDQGHDDASRPVVMLDTRNAFEVDVGTFDRALDYRIDKFSEFPAVIEANRADLEGKTIVSFCTGGIRCEKAAIHMKDVGIENVYQLEGGILKYFEEVGGAHYHGDCFVFDYRTALNPQLAPTADVTCFACRAVVPADAQQSPLYVPGKCCPACHPGDSGTPGRRAEPGAEPARAV</sequence>
<proteinExistence type="inferred from homology"/>
<dbReference type="EC" id="1.14.-.-" evidence="1"/>
<dbReference type="EMBL" id="BX571965">
    <property type="protein sequence ID" value="CAH35109.1"/>
    <property type="molecule type" value="Genomic_DNA"/>
</dbReference>
<dbReference type="RefSeq" id="WP_009936832.1">
    <property type="nucleotide sequence ID" value="NC_006350.1"/>
</dbReference>
<dbReference type="RefSeq" id="YP_107737.1">
    <property type="nucleotide sequence ID" value="NC_006350.1"/>
</dbReference>
<dbReference type="SMR" id="Q63VX9"/>
<dbReference type="STRING" id="272560.BPSL1116"/>
<dbReference type="KEGG" id="bps:BPSL1116"/>
<dbReference type="PATRIC" id="fig|272560.51.peg.432"/>
<dbReference type="eggNOG" id="COG1054">
    <property type="taxonomic scope" value="Bacteria"/>
</dbReference>
<dbReference type="Proteomes" id="UP000000605">
    <property type="component" value="Chromosome 1"/>
</dbReference>
<dbReference type="GO" id="GO:0016705">
    <property type="term" value="F:oxidoreductase activity, acting on paired donors, with incorporation or reduction of molecular oxygen"/>
    <property type="evidence" value="ECO:0007669"/>
    <property type="project" value="UniProtKB-UniRule"/>
</dbReference>
<dbReference type="GO" id="GO:0006400">
    <property type="term" value="P:tRNA modification"/>
    <property type="evidence" value="ECO:0007669"/>
    <property type="project" value="UniProtKB-UniRule"/>
</dbReference>
<dbReference type="CDD" id="cd01518">
    <property type="entry name" value="RHOD_YceA"/>
    <property type="match status" value="1"/>
</dbReference>
<dbReference type="Gene3D" id="3.30.70.100">
    <property type="match status" value="1"/>
</dbReference>
<dbReference type="Gene3D" id="3.40.250.10">
    <property type="entry name" value="Rhodanese-like domain"/>
    <property type="match status" value="1"/>
</dbReference>
<dbReference type="HAMAP" id="MF_00469">
    <property type="entry name" value="TrhO"/>
    <property type="match status" value="1"/>
</dbReference>
<dbReference type="InterPro" id="IPR001763">
    <property type="entry name" value="Rhodanese-like_dom"/>
</dbReference>
<dbReference type="InterPro" id="IPR036873">
    <property type="entry name" value="Rhodanese-like_dom_sf"/>
</dbReference>
<dbReference type="InterPro" id="IPR020936">
    <property type="entry name" value="TrhO"/>
</dbReference>
<dbReference type="InterPro" id="IPR040503">
    <property type="entry name" value="TRHO_N"/>
</dbReference>
<dbReference type="NCBIfam" id="NF003703">
    <property type="entry name" value="PRK05320.1"/>
    <property type="match status" value="1"/>
</dbReference>
<dbReference type="PANTHER" id="PTHR43268:SF3">
    <property type="entry name" value="RHODANESE-LIKE DOMAIN-CONTAINING PROTEIN 7-RELATED"/>
    <property type="match status" value="1"/>
</dbReference>
<dbReference type="PANTHER" id="PTHR43268">
    <property type="entry name" value="THIOSULFATE SULFURTRANSFERASE/RHODANESE-LIKE DOMAIN-CONTAINING PROTEIN 2"/>
    <property type="match status" value="1"/>
</dbReference>
<dbReference type="Pfam" id="PF00581">
    <property type="entry name" value="Rhodanese"/>
    <property type="match status" value="1"/>
</dbReference>
<dbReference type="Pfam" id="PF17773">
    <property type="entry name" value="UPF0176_N"/>
    <property type="match status" value="1"/>
</dbReference>
<dbReference type="SMART" id="SM00450">
    <property type="entry name" value="RHOD"/>
    <property type="match status" value="1"/>
</dbReference>
<dbReference type="SUPFAM" id="SSF52821">
    <property type="entry name" value="Rhodanese/Cell cycle control phosphatase"/>
    <property type="match status" value="1"/>
</dbReference>
<dbReference type="PROSITE" id="PS50206">
    <property type="entry name" value="RHODANESE_3"/>
    <property type="match status" value="1"/>
</dbReference>
<protein>
    <recommendedName>
        <fullName evidence="1">tRNA uridine(34) hydroxylase</fullName>
        <ecNumber evidence="1">1.14.-.-</ecNumber>
    </recommendedName>
    <alternativeName>
        <fullName evidence="1">tRNA hydroxylation protein O</fullName>
    </alternativeName>
</protein>
<comment type="function">
    <text evidence="1">Catalyzes oxygen-dependent 5-hydroxyuridine (ho5U) modification at position 34 in tRNAs.</text>
</comment>
<comment type="catalytic activity">
    <reaction evidence="1">
        <text>uridine(34) in tRNA + AH2 + O2 = 5-hydroxyuridine(34) in tRNA + A + H2O</text>
        <dbReference type="Rhea" id="RHEA:64224"/>
        <dbReference type="Rhea" id="RHEA-COMP:11727"/>
        <dbReference type="Rhea" id="RHEA-COMP:13381"/>
        <dbReference type="ChEBI" id="CHEBI:13193"/>
        <dbReference type="ChEBI" id="CHEBI:15377"/>
        <dbReference type="ChEBI" id="CHEBI:15379"/>
        <dbReference type="ChEBI" id="CHEBI:17499"/>
        <dbReference type="ChEBI" id="CHEBI:65315"/>
        <dbReference type="ChEBI" id="CHEBI:136877"/>
    </reaction>
</comment>
<comment type="similarity">
    <text evidence="1">Belongs to the TrhO family.</text>
</comment>
<organism>
    <name type="scientific">Burkholderia pseudomallei (strain K96243)</name>
    <dbReference type="NCBI Taxonomy" id="272560"/>
    <lineage>
        <taxon>Bacteria</taxon>
        <taxon>Pseudomonadati</taxon>
        <taxon>Pseudomonadota</taxon>
        <taxon>Betaproteobacteria</taxon>
        <taxon>Burkholderiales</taxon>
        <taxon>Burkholderiaceae</taxon>
        <taxon>Burkholderia</taxon>
        <taxon>pseudomallei group</taxon>
    </lineage>
</organism>
<keyword id="KW-0560">Oxidoreductase</keyword>
<keyword id="KW-1185">Reference proteome</keyword>
<keyword id="KW-0819">tRNA processing</keyword>
<gene>
    <name evidence="1" type="primary">trhO</name>
    <name type="ordered locus">BPSL1116</name>
</gene>